<dbReference type="EMBL" id="X04267">
    <property type="protein sequence ID" value="CAA27817.1"/>
    <property type="molecule type" value="Genomic_DNA"/>
</dbReference>
<dbReference type="PIR" id="A24922">
    <property type="entry name" value="A24922"/>
</dbReference>
<dbReference type="RefSeq" id="NP_036736.1">
    <property type="nucleotide sequence ID" value="NM_012604.1"/>
</dbReference>
<dbReference type="SMR" id="P12847"/>
<dbReference type="BioGRID" id="246726">
    <property type="interactions" value="1"/>
</dbReference>
<dbReference type="FunCoup" id="P12847">
    <property type="interactions" value="255"/>
</dbReference>
<dbReference type="STRING" id="10116.ENSRNOP00000004147"/>
<dbReference type="GlyGen" id="P12847">
    <property type="glycosylation" value="1 site, 1 O-linked glycan (1 site)"/>
</dbReference>
<dbReference type="iPTMnet" id="P12847"/>
<dbReference type="PhosphoSitePlus" id="P12847"/>
<dbReference type="PaxDb" id="10116-ENSRNOP00000004147"/>
<dbReference type="GeneID" id="24583"/>
<dbReference type="KEGG" id="rno:24583"/>
<dbReference type="UCSC" id="RGD:3138">
    <property type="organism name" value="rat"/>
</dbReference>
<dbReference type="AGR" id="RGD:3138"/>
<dbReference type="CTD" id="4621"/>
<dbReference type="RGD" id="3138">
    <property type="gene designation" value="Myh3"/>
</dbReference>
<dbReference type="eggNOG" id="KOG0161">
    <property type="taxonomic scope" value="Eukaryota"/>
</dbReference>
<dbReference type="InParanoid" id="P12847"/>
<dbReference type="PhylomeDB" id="P12847"/>
<dbReference type="Reactome" id="R-RNO-390522">
    <property type="pathway name" value="Striated Muscle Contraction"/>
</dbReference>
<dbReference type="PRO" id="PR:P12847"/>
<dbReference type="Proteomes" id="UP000002494">
    <property type="component" value="Unplaced"/>
</dbReference>
<dbReference type="GO" id="GO:0043292">
    <property type="term" value="C:contractile muscle fiber"/>
    <property type="evidence" value="ECO:0000266"/>
    <property type="project" value="RGD"/>
</dbReference>
<dbReference type="GO" id="GO:0005737">
    <property type="term" value="C:cytoplasm"/>
    <property type="evidence" value="ECO:0000318"/>
    <property type="project" value="GO_Central"/>
</dbReference>
<dbReference type="GO" id="GO:0030016">
    <property type="term" value="C:myofibril"/>
    <property type="evidence" value="ECO:0007669"/>
    <property type="project" value="UniProtKB-SubCell"/>
</dbReference>
<dbReference type="GO" id="GO:0016459">
    <property type="term" value="C:myosin complex"/>
    <property type="evidence" value="ECO:0000266"/>
    <property type="project" value="RGD"/>
</dbReference>
<dbReference type="GO" id="GO:0032982">
    <property type="term" value="C:myosin filament"/>
    <property type="evidence" value="ECO:0000318"/>
    <property type="project" value="GO_Central"/>
</dbReference>
<dbReference type="GO" id="GO:0016460">
    <property type="term" value="C:myosin II complex"/>
    <property type="evidence" value="ECO:0000318"/>
    <property type="project" value="GO_Central"/>
</dbReference>
<dbReference type="GO" id="GO:0051015">
    <property type="term" value="F:actin filament binding"/>
    <property type="evidence" value="ECO:0000266"/>
    <property type="project" value="RGD"/>
</dbReference>
<dbReference type="GO" id="GO:0005524">
    <property type="term" value="F:ATP binding"/>
    <property type="evidence" value="ECO:0007669"/>
    <property type="project" value="UniProtKB-KW"/>
</dbReference>
<dbReference type="GO" id="GO:0016887">
    <property type="term" value="F:ATP hydrolysis activity"/>
    <property type="evidence" value="ECO:0000266"/>
    <property type="project" value="RGD"/>
</dbReference>
<dbReference type="GO" id="GO:0005516">
    <property type="term" value="F:calmodulin binding"/>
    <property type="evidence" value="ECO:0007669"/>
    <property type="project" value="UniProtKB-KW"/>
</dbReference>
<dbReference type="GO" id="GO:0000146">
    <property type="term" value="F:microfilament motor activity"/>
    <property type="evidence" value="ECO:0000266"/>
    <property type="project" value="RGD"/>
</dbReference>
<dbReference type="GO" id="GO:0046034">
    <property type="term" value="P:ATP metabolic process"/>
    <property type="evidence" value="ECO:0000266"/>
    <property type="project" value="RGD"/>
</dbReference>
<dbReference type="GO" id="GO:0006936">
    <property type="term" value="P:muscle contraction"/>
    <property type="evidence" value="ECO:0000318"/>
    <property type="project" value="GO_Central"/>
</dbReference>
<dbReference type="GO" id="GO:0003009">
    <property type="term" value="P:skeletal muscle contraction"/>
    <property type="evidence" value="ECO:0000266"/>
    <property type="project" value="RGD"/>
</dbReference>
<dbReference type="CDD" id="cd14913">
    <property type="entry name" value="MYSc_Myh3"/>
    <property type="match status" value="1"/>
</dbReference>
<dbReference type="FunFam" id="1.10.10.820:FF:000001">
    <property type="entry name" value="Myosin heavy chain"/>
    <property type="match status" value="1"/>
</dbReference>
<dbReference type="FunFam" id="1.20.5.340:FF:000002">
    <property type="entry name" value="Myosin heavy chain"/>
    <property type="match status" value="1"/>
</dbReference>
<dbReference type="FunFam" id="1.20.5.340:FF:000003">
    <property type="entry name" value="Myosin heavy chain"/>
    <property type="match status" value="1"/>
</dbReference>
<dbReference type="FunFam" id="1.20.5.340:FF:000004">
    <property type="entry name" value="Myosin heavy chain"/>
    <property type="match status" value="1"/>
</dbReference>
<dbReference type="FunFam" id="1.20.5.340:FF:000006">
    <property type="entry name" value="Myosin heavy chain"/>
    <property type="match status" value="1"/>
</dbReference>
<dbReference type="FunFam" id="1.20.5.340:FF:000013">
    <property type="entry name" value="Myosin heavy chain"/>
    <property type="match status" value="1"/>
</dbReference>
<dbReference type="FunFam" id="1.20.5.370:FF:000001">
    <property type="entry name" value="Myosin heavy chain"/>
    <property type="match status" value="1"/>
</dbReference>
<dbReference type="FunFam" id="1.20.5.370:FF:000002">
    <property type="entry name" value="Myosin heavy chain"/>
    <property type="match status" value="1"/>
</dbReference>
<dbReference type="FunFam" id="1.20.5.370:FF:000003">
    <property type="entry name" value="Myosin heavy chain"/>
    <property type="match status" value="1"/>
</dbReference>
<dbReference type="FunFam" id="1.20.5.370:FF:000007">
    <property type="entry name" value="Myosin heavy chain"/>
    <property type="match status" value="1"/>
</dbReference>
<dbReference type="FunFam" id="1.20.5.370:FF:000008">
    <property type="entry name" value="Myosin heavy chain"/>
    <property type="match status" value="1"/>
</dbReference>
<dbReference type="FunFam" id="1.20.5.4820:FF:000001">
    <property type="entry name" value="Myosin heavy chain"/>
    <property type="match status" value="1"/>
</dbReference>
<dbReference type="FunFam" id="1.20.58.530:FF:000001">
    <property type="entry name" value="Myosin heavy chain"/>
    <property type="match status" value="1"/>
</dbReference>
<dbReference type="FunFam" id="2.30.30.360:FF:000001">
    <property type="entry name" value="Myosin heavy chain"/>
    <property type="match status" value="1"/>
</dbReference>
<dbReference type="FunFam" id="3.40.850.10:FF:000024">
    <property type="entry name" value="Myosin heavy chain, isoform J"/>
    <property type="match status" value="1"/>
</dbReference>
<dbReference type="FunFam" id="1.20.120.720:FF:000001">
    <property type="entry name" value="Myosin heavy chain, muscle"/>
    <property type="match status" value="1"/>
</dbReference>
<dbReference type="Gene3D" id="1.10.10.820">
    <property type="match status" value="1"/>
</dbReference>
<dbReference type="Gene3D" id="1.20.5.340">
    <property type="match status" value="5"/>
</dbReference>
<dbReference type="Gene3D" id="1.20.5.370">
    <property type="match status" value="4"/>
</dbReference>
<dbReference type="Gene3D" id="1.20.5.4820">
    <property type="match status" value="1"/>
</dbReference>
<dbReference type="Gene3D" id="1.20.58.530">
    <property type="match status" value="1"/>
</dbReference>
<dbReference type="Gene3D" id="6.10.250.2420">
    <property type="match status" value="1"/>
</dbReference>
<dbReference type="Gene3D" id="3.40.850.10">
    <property type="entry name" value="Kinesin motor domain"/>
    <property type="match status" value="1"/>
</dbReference>
<dbReference type="Gene3D" id="2.30.30.360">
    <property type="entry name" value="Myosin S1 fragment, N-terminal"/>
    <property type="match status" value="1"/>
</dbReference>
<dbReference type="Gene3D" id="1.20.120.720">
    <property type="entry name" value="Myosin VI head, motor domain, U50 subdomain"/>
    <property type="match status" value="1"/>
</dbReference>
<dbReference type="InterPro" id="IPR000048">
    <property type="entry name" value="IQ_motif_EF-hand-BS"/>
</dbReference>
<dbReference type="InterPro" id="IPR036961">
    <property type="entry name" value="Kinesin_motor_dom_sf"/>
</dbReference>
<dbReference type="InterPro" id="IPR001609">
    <property type="entry name" value="Myosin_head_motor_dom-like"/>
</dbReference>
<dbReference type="InterPro" id="IPR004009">
    <property type="entry name" value="Myosin_N"/>
</dbReference>
<dbReference type="InterPro" id="IPR008989">
    <property type="entry name" value="Myosin_S1_N"/>
</dbReference>
<dbReference type="InterPro" id="IPR002928">
    <property type="entry name" value="Myosin_tail"/>
</dbReference>
<dbReference type="InterPro" id="IPR036000">
    <property type="entry name" value="MYSc_Myh3"/>
</dbReference>
<dbReference type="InterPro" id="IPR027417">
    <property type="entry name" value="P-loop_NTPase"/>
</dbReference>
<dbReference type="InterPro" id="IPR014751">
    <property type="entry name" value="XRCC4-like_C"/>
</dbReference>
<dbReference type="PANTHER" id="PTHR45615">
    <property type="entry name" value="MYOSIN HEAVY CHAIN, NON-MUSCLE"/>
    <property type="match status" value="1"/>
</dbReference>
<dbReference type="PANTHER" id="PTHR45615:SF6">
    <property type="entry name" value="MYOSIN-3"/>
    <property type="match status" value="1"/>
</dbReference>
<dbReference type="Pfam" id="PF00063">
    <property type="entry name" value="Myosin_head"/>
    <property type="match status" value="1"/>
</dbReference>
<dbReference type="Pfam" id="PF02736">
    <property type="entry name" value="Myosin_N"/>
    <property type="match status" value="1"/>
</dbReference>
<dbReference type="Pfam" id="PF01576">
    <property type="entry name" value="Myosin_tail_1"/>
    <property type="match status" value="1"/>
</dbReference>
<dbReference type="PRINTS" id="PR00193">
    <property type="entry name" value="MYOSINHEAVY"/>
</dbReference>
<dbReference type="SMART" id="SM00015">
    <property type="entry name" value="IQ"/>
    <property type="match status" value="2"/>
</dbReference>
<dbReference type="SMART" id="SM00242">
    <property type="entry name" value="MYSc"/>
    <property type="match status" value="1"/>
</dbReference>
<dbReference type="SUPFAM" id="SSF90257">
    <property type="entry name" value="Myosin rod fragments"/>
    <property type="match status" value="4"/>
</dbReference>
<dbReference type="SUPFAM" id="SSF52540">
    <property type="entry name" value="P-loop containing nucleoside triphosphate hydrolases"/>
    <property type="match status" value="1"/>
</dbReference>
<dbReference type="SUPFAM" id="SSF57997">
    <property type="entry name" value="Tropomyosin"/>
    <property type="match status" value="1"/>
</dbReference>
<dbReference type="PROSITE" id="PS50096">
    <property type="entry name" value="IQ"/>
    <property type="match status" value="1"/>
</dbReference>
<dbReference type="PROSITE" id="PS51456">
    <property type="entry name" value="MYOSIN_MOTOR"/>
    <property type="match status" value="1"/>
</dbReference>
<dbReference type="PROSITE" id="PS51844">
    <property type="entry name" value="SH3_LIKE"/>
    <property type="match status" value="1"/>
</dbReference>
<sequence length="1940" mass="223858">MSSDTEMEVFGIAAPFLRKSEKERIEAQNQPFDAKTYCFVVDSKEEYAKGKIKSSQDGKVTVETEDNRTLVVKPEDVYAMNPPKFDKIEDMAMLTHLNEPAVLYNLKDRYTSWMIYTYSGLFCVTVNPYKWLPVYTPEVVDGYRGKKRQEAPPHIFSISDNAYQFMLTDRENQSILITGESGAGKTVNTKRVIQYFATIAATGDLAKKKDSKMKGTLEDQIISANPLLEAFGNAKTVRNDNSSRFGKFIRIHFGTTGKLASADIETYLLEKSRVTFQLKAERSYHIFYQILSNKKPELIELLLITTNPYDYPFISQGEILVASIDDREELLATDSAIDILGFTPEEKSGLYKLTGAVMHYGNMKFKQKQREEQAEPDGTEVADKTAYLMGLNSSDLLKALCFPRVKVGNEYVTKGQTVDQVHHAVNALSKSVYEKLFLWMVTRINQQLDTKLPRQHFIGVLDIAGFEIFEYNSLEQLCINFTNEKLQQFFNHHMFVLEQEEYKKEGIEWTFIDFGMDLAACIELIEKPMGIFSILEEECMFPKATDTSFKNKLYDQHLGKSNNFQKPKVVKGKAEAHFSLIHYAGTVDYSVSGWLEKNKDPLNETVVGLYQKSSNRLLAHLYATFATTDADGGKKKVAKKKGSSFQTVSALFRENLNKLMSNLRTTHPHFVRCIIPNETKTPGAMEHSLVLHQLRCNGVLEGIRICRKGFPNRILYGDFKQRYRVLNASAIPEGQFIDSKKACEKLLASIDIDHTQYKFGHTKVFFKAGLLGTLEEMRDERLAKLITRTQAVCRGFLMRVEFQKMMQRRESIFCIQYNIRAFMNVKHWPWMKLFFKIKPLLKSAETEKEMATMKEEFQKTKDELAKSEAKRKELEEKLVTLVQEKNDLQLQVQAESENLLDAEERCDQLIKAKFQLEAKIKEVTERAEDEEEINAELTAKKRKLEDECSELKKDIDDLELTLAKVEKEKHATENKVKNLTEELAGLDETIAKLTREKKALQEAHQQTLDDLQAEEDKVNSLSKLKSKLEQQVDDLESSLEQEKKLRVDLERNKRKLEGDLKLAQESILDLENDKQQLDERLKKKDFEYSQLQSKVEDEQTLSLQLQKKIKELQARIEELEEEIEAERATRAKTEKQRSDYARELEELSERLEEAGGVTSTQIELNKKREAEFLKLRRDLEEATLQHEATVATLRKKHADSAAELAEQIDNLQRVKQKLEKEKSEFKLEIDDLSSSVESVSKSKANLEKICRTLEDQLSEARGKNEETQRSLSELTTQKSRLQTEAGELSRQLEEKESIVSQLSRSKQAFTQQIEELKRQLEEENKAKNALAHALQSSRHDCDLLREQYEEEQEGKAELQRALSKANSEVAQWRTKYETDAIQRTEELEEAKKKLAQRLQDSEEQVEAVNAKCASLEKTKQRLQGEVEDLMVDVERANSLAAALDKKQRNFDKVLAEWKTKCEESQAELEAALKESRSLSTELFKLKNAYEEALDQLETVKRENKNLEQEIADLTEQIAENGKSIHELEKSRKQMELEKADIQMALEEAEAALEHEEAKILRIQLELTQVKSEIDRKIAEKDEEIEQLKRNYQRTVETMQGALDAEVRSRNEAIRLKKKMEGDLNEIEIQLSHANRQAAETIKHLRSVQGQLKDTQLHLDDALRGQEDLKEQLAIVERRANLLQAEVEELRATLEQTERARKLAEQELLDSNERVQLLHTQNTSLIHTKKKLETDLTQLQSEVEDASRDARNAEEKAKKAITDAAMMAEELKKEQDTSAHLERMKKNLEQTVKDLQHRLDEAEQLALKGGKKQIQKLETRIRELEFELEGEQKRNTESVKGLRKYERRVKELTYQSEEDRKNVLRLQDLVDKLQVKVKSYKRQAEEADEQANVHLTKFRKAQHELEEAEERADIAESQVNKLRAKTRDFTSSRMVVHESEE</sequence>
<feature type="chain" id="PRO_0000123396" description="Myosin-3">
    <location>
        <begin position="1"/>
        <end position="1940"/>
    </location>
</feature>
<feature type="domain" description="Myosin N-terminal SH3-like" evidence="4">
    <location>
        <begin position="33"/>
        <end position="82"/>
    </location>
</feature>
<feature type="domain" description="Myosin motor" evidence="3">
    <location>
        <begin position="86"/>
        <end position="779"/>
    </location>
</feature>
<feature type="domain" description="IQ" evidence="2">
    <location>
        <begin position="782"/>
        <end position="811"/>
    </location>
</feature>
<feature type="region of interest" description="Actin-binding">
    <location>
        <begin position="656"/>
        <end position="678"/>
    </location>
</feature>
<feature type="region of interest" description="Actin-binding">
    <location>
        <begin position="758"/>
        <end position="772"/>
    </location>
</feature>
<feature type="region of interest" description="Disordered" evidence="5">
    <location>
        <begin position="1260"/>
        <end position="1289"/>
    </location>
</feature>
<feature type="coiled-coil region" evidence="1">
    <location>
        <begin position="840"/>
        <end position="1933"/>
    </location>
</feature>
<feature type="compositionally biased region" description="Polar residues" evidence="5">
    <location>
        <begin position="1269"/>
        <end position="1282"/>
    </location>
</feature>
<feature type="binding site" evidence="1">
    <location>
        <begin position="179"/>
        <end position="186"/>
    </location>
    <ligand>
        <name>ATP</name>
        <dbReference type="ChEBI" id="CHEBI:30616"/>
    </ligand>
</feature>
<feature type="modified residue" description="N6,N6,N6-trimethyllysine" evidence="1">
    <location>
        <position position="130"/>
    </location>
</feature>
<keyword id="KW-0009">Actin-binding</keyword>
<keyword id="KW-0067">ATP-binding</keyword>
<keyword id="KW-0112">Calmodulin-binding</keyword>
<keyword id="KW-0175">Coiled coil</keyword>
<keyword id="KW-0963">Cytoplasm</keyword>
<keyword id="KW-0488">Methylation</keyword>
<keyword id="KW-0505">Motor protein</keyword>
<keyword id="KW-0514">Muscle protein</keyword>
<keyword id="KW-0518">Myosin</keyword>
<keyword id="KW-0547">Nucleotide-binding</keyword>
<keyword id="KW-1185">Reference proteome</keyword>
<keyword id="KW-0787">Thick filament</keyword>
<gene>
    <name type="primary">Myh3</name>
</gene>
<organism>
    <name type="scientific">Rattus norvegicus</name>
    <name type="common">Rat</name>
    <dbReference type="NCBI Taxonomy" id="10116"/>
    <lineage>
        <taxon>Eukaryota</taxon>
        <taxon>Metazoa</taxon>
        <taxon>Chordata</taxon>
        <taxon>Craniata</taxon>
        <taxon>Vertebrata</taxon>
        <taxon>Euteleostomi</taxon>
        <taxon>Mammalia</taxon>
        <taxon>Eutheria</taxon>
        <taxon>Euarchontoglires</taxon>
        <taxon>Glires</taxon>
        <taxon>Rodentia</taxon>
        <taxon>Myomorpha</taxon>
        <taxon>Muroidea</taxon>
        <taxon>Muridae</taxon>
        <taxon>Murinae</taxon>
        <taxon>Rattus</taxon>
    </lineage>
</organism>
<accession>P12847</accession>
<protein>
    <recommendedName>
        <fullName>Myosin-3</fullName>
    </recommendedName>
    <alternativeName>
        <fullName>Myosin heavy chain 3</fullName>
    </alternativeName>
    <alternativeName>
        <fullName>Myosin heavy chain, fast skeletal muscle, embryonic</fullName>
    </alternativeName>
</protein>
<reference key="1">
    <citation type="journal article" date="1986" name="J. Mol. Biol.">
        <title>Complete nucleotide and encoded amino acid sequence of a mammalian myosin heavy chain gene. Evidence against intron-dependent evolution of the rod.</title>
        <authorList>
            <person name="Strehler E.E."/>
            <person name="Strehler-Page M.-A."/>
            <person name="Perriard J.-C."/>
            <person name="Periasamy M."/>
            <person name="Nadal-Ginard B."/>
        </authorList>
    </citation>
    <scope>NUCLEOTIDE SEQUENCE [GENOMIC DNA]</scope>
</reference>
<reference key="2">
    <citation type="journal article" date="1985" name="J. Biol. Chem.">
        <title>Intron positions are conserved in the 5' end region of myosin heavy-chain genes.</title>
        <authorList>
            <person name="Strehler E.E."/>
            <person name="Mahdavi V."/>
            <person name="Periasamy M."/>
            <person name="Nadal-Ginard B."/>
        </authorList>
    </citation>
    <scope>NUCLEOTIDE SEQUENCE [GENOMIC DNA] OF 1-168</scope>
</reference>
<reference key="3">
    <citation type="journal article" date="1985" name="J. Biol. Chem.">
        <title>Characterization of cDNA and genomic sequences corresponding to an embryonic myosin heavy chain.</title>
        <authorList>
            <person name="Periasamy M."/>
            <person name="Wydro R.M."/>
            <person name="Strehler-Page M.-A."/>
            <person name="Strehler E.E."/>
            <person name="Nadal-Ginard B."/>
        </authorList>
    </citation>
    <scope>NUCLEOTIDE SEQUENCE [GENOMIC DNA] OF 1453-1940</scope>
</reference>
<comment type="function">
    <text>Muscle contraction.</text>
</comment>
<comment type="subunit">
    <text>Muscle myosin is a hexameric protein that consists of 2 heavy chain subunits (MHC), 2 alkali light chain subunits (MLC) and 2 regulatory light chain subunits (MLC-2).</text>
</comment>
<comment type="subcellular location">
    <subcellularLocation>
        <location>Cytoplasm</location>
        <location>Myofibril</location>
    </subcellularLocation>
    <text>Thick filaments of the myofibrils.</text>
</comment>
<comment type="domain">
    <text>The rodlike tail sequence is highly repetitive, showing cycles of a 28-residue repeat pattern composed of 4 heptapeptides, characteristic for alpha-helical coiled coils.</text>
</comment>
<comment type="domain">
    <text evidence="6">Limited proteolysis of myosin heavy chain produces 1 light meromyosin (LMM) and 1 heavy meromyosin (HMM). HMM can be further cleaved into 2 globular subfragments (S1) and 1 rod-shaped subfragment (S2).</text>
</comment>
<comment type="similarity">
    <text evidence="6">Belongs to the TRAFAC class myosin-kinesin ATPase superfamily. Myosin family.</text>
</comment>
<comment type="caution">
    <text evidence="6">Represents a conventional myosin. This protein should not be confused with the unconventional myosin-3 (MYO3).</text>
</comment>
<evidence type="ECO:0000255" key="1"/>
<evidence type="ECO:0000255" key="2">
    <source>
        <dbReference type="PROSITE-ProRule" id="PRU00116"/>
    </source>
</evidence>
<evidence type="ECO:0000255" key="3">
    <source>
        <dbReference type="PROSITE-ProRule" id="PRU00782"/>
    </source>
</evidence>
<evidence type="ECO:0000255" key="4">
    <source>
        <dbReference type="PROSITE-ProRule" id="PRU01190"/>
    </source>
</evidence>
<evidence type="ECO:0000256" key="5">
    <source>
        <dbReference type="SAM" id="MobiDB-lite"/>
    </source>
</evidence>
<evidence type="ECO:0000305" key="6"/>
<name>MYH3_RAT</name>
<proteinExistence type="inferred from homology"/>